<organism>
    <name type="scientific">Chlamydia trachomatis serovar A (strain ATCC VR-571B / DSM 19440 / HAR-13)</name>
    <dbReference type="NCBI Taxonomy" id="315277"/>
    <lineage>
        <taxon>Bacteria</taxon>
        <taxon>Pseudomonadati</taxon>
        <taxon>Chlamydiota</taxon>
        <taxon>Chlamydiia</taxon>
        <taxon>Chlamydiales</taxon>
        <taxon>Chlamydiaceae</taxon>
        <taxon>Chlamydia/Chlamydophila group</taxon>
        <taxon>Chlamydia</taxon>
    </lineage>
</organism>
<comment type="function">
    <text evidence="1">Catalyzes the deamination of dCTP to dUTP.</text>
</comment>
<comment type="catalytic activity">
    <reaction evidence="1">
        <text>dCTP + H2O + H(+) = dUTP + NH4(+)</text>
        <dbReference type="Rhea" id="RHEA:22680"/>
        <dbReference type="ChEBI" id="CHEBI:15377"/>
        <dbReference type="ChEBI" id="CHEBI:15378"/>
        <dbReference type="ChEBI" id="CHEBI:28938"/>
        <dbReference type="ChEBI" id="CHEBI:61481"/>
        <dbReference type="ChEBI" id="CHEBI:61555"/>
        <dbReference type="EC" id="3.5.4.13"/>
    </reaction>
</comment>
<comment type="pathway">
    <text evidence="1">Pyrimidine metabolism; dUMP biosynthesis; dUMP from dCTP (dUTP route): step 1/2.</text>
</comment>
<comment type="subunit">
    <text evidence="1">Homotrimer.</text>
</comment>
<comment type="similarity">
    <text evidence="1">Belongs to the dCTP deaminase family.</text>
</comment>
<evidence type="ECO:0000255" key="1">
    <source>
        <dbReference type="HAMAP-Rule" id="MF_00146"/>
    </source>
</evidence>
<reference key="1">
    <citation type="journal article" date="2005" name="Infect. Immun.">
        <title>Comparative genomic analysis of Chlamydia trachomatis oculotropic and genitotropic strains.</title>
        <authorList>
            <person name="Carlson J.H."/>
            <person name="Porcella S.F."/>
            <person name="McClarty G."/>
            <person name="Caldwell H.D."/>
        </authorList>
    </citation>
    <scope>NUCLEOTIDE SEQUENCE [LARGE SCALE GENOMIC DNA]</scope>
    <source>
        <strain>ATCC VR-571B / DSM 19440 / HAR-13</strain>
    </source>
</reference>
<accession>Q3KMY3</accession>
<gene>
    <name evidence="1" type="primary">dcd</name>
    <name type="ordered locus">CTA_0042</name>
</gene>
<protein>
    <recommendedName>
        <fullName evidence="1">dCTP deaminase</fullName>
        <ecNumber evidence="1">3.5.4.13</ecNumber>
    </recommendedName>
    <alternativeName>
        <fullName evidence="1">Deoxycytidine triphosphate deaminase</fullName>
    </alternativeName>
</protein>
<keyword id="KW-0378">Hydrolase</keyword>
<keyword id="KW-0546">Nucleotide metabolism</keyword>
<keyword id="KW-0547">Nucleotide-binding</keyword>
<name>DCD_CHLTA</name>
<feature type="chain" id="PRO_1000009705" description="dCTP deaminase">
    <location>
        <begin position="1"/>
        <end position="190"/>
    </location>
</feature>
<feature type="active site" description="Proton donor/acceptor" evidence="1">
    <location>
        <position position="139"/>
    </location>
</feature>
<feature type="binding site" evidence="1">
    <location>
        <begin position="113"/>
        <end position="118"/>
    </location>
    <ligand>
        <name>dCTP</name>
        <dbReference type="ChEBI" id="CHEBI:61481"/>
    </ligand>
</feature>
<feature type="binding site" evidence="1">
    <location>
        <position position="158"/>
    </location>
    <ligand>
        <name>dCTP</name>
        <dbReference type="ChEBI" id="CHEBI:61481"/>
    </ligand>
</feature>
<feature type="binding site" evidence="1">
    <location>
        <position position="172"/>
    </location>
    <ligand>
        <name>dCTP</name>
        <dbReference type="ChEBI" id="CHEBI:61481"/>
    </ligand>
</feature>
<feature type="binding site" evidence="1">
    <location>
        <position position="181"/>
    </location>
    <ligand>
        <name>dCTP</name>
        <dbReference type="ChEBI" id="CHEBI:61481"/>
    </ligand>
</feature>
<feature type="binding site" evidence="1">
    <location>
        <position position="182"/>
    </location>
    <ligand>
        <name>dCTP</name>
        <dbReference type="ChEBI" id="CHEBI:61481"/>
    </ligand>
</feature>
<proteinExistence type="inferred from homology"/>
<sequence>MGIKEDNWIRKMAIEEGMIEPFADSQVKLHPETGEKLISYGLSSYGYDLRISREFKVFTNVYNSLVDPKCFTEDALISIVDDVCIIPPNSFALARSVEYFRIPRNVLTVCIGKSTYARCGLIVNVTPFEPEWEGYVTIEISNTTPLPAKVYANEGIAQVLFFEGDATCDVSYAERQGKYQKQQGITIPFV</sequence>
<dbReference type="EC" id="3.5.4.13" evidence="1"/>
<dbReference type="EMBL" id="CP000051">
    <property type="protein sequence ID" value="AAX50289.1"/>
    <property type="molecule type" value="Genomic_DNA"/>
</dbReference>
<dbReference type="RefSeq" id="WP_009871386.1">
    <property type="nucleotide sequence ID" value="NC_007429.1"/>
</dbReference>
<dbReference type="SMR" id="Q3KMY3"/>
<dbReference type="KEGG" id="cta:CTA_0042"/>
<dbReference type="HOGENOM" id="CLU_087476_4_0_0"/>
<dbReference type="UniPathway" id="UPA00610">
    <property type="reaction ID" value="UER00665"/>
</dbReference>
<dbReference type="Proteomes" id="UP000002532">
    <property type="component" value="Chromosome"/>
</dbReference>
<dbReference type="GO" id="GO:0008829">
    <property type="term" value="F:dCTP deaminase activity"/>
    <property type="evidence" value="ECO:0007669"/>
    <property type="project" value="UniProtKB-UniRule"/>
</dbReference>
<dbReference type="GO" id="GO:0000166">
    <property type="term" value="F:nucleotide binding"/>
    <property type="evidence" value="ECO:0007669"/>
    <property type="project" value="UniProtKB-KW"/>
</dbReference>
<dbReference type="GO" id="GO:0006226">
    <property type="term" value="P:dUMP biosynthetic process"/>
    <property type="evidence" value="ECO:0007669"/>
    <property type="project" value="UniProtKB-UniPathway"/>
</dbReference>
<dbReference type="GO" id="GO:0006229">
    <property type="term" value="P:dUTP biosynthetic process"/>
    <property type="evidence" value="ECO:0007669"/>
    <property type="project" value="UniProtKB-UniRule"/>
</dbReference>
<dbReference type="GO" id="GO:0015949">
    <property type="term" value="P:nucleobase-containing small molecule interconversion"/>
    <property type="evidence" value="ECO:0007669"/>
    <property type="project" value="TreeGrafter"/>
</dbReference>
<dbReference type="CDD" id="cd07557">
    <property type="entry name" value="trimeric_dUTPase"/>
    <property type="match status" value="1"/>
</dbReference>
<dbReference type="FunFam" id="2.70.40.10:FF:000001">
    <property type="entry name" value="dCTP deaminase"/>
    <property type="match status" value="1"/>
</dbReference>
<dbReference type="Gene3D" id="2.70.40.10">
    <property type="match status" value="1"/>
</dbReference>
<dbReference type="HAMAP" id="MF_00146">
    <property type="entry name" value="dCTP_deaminase"/>
    <property type="match status" value="1"/>
</dbReference>
<dbReference type="InterPro" id="IPR011962">
    <property type="entry name" value="dCTP_deaminase"/>
</dbReference>
<dbReference type="InterPro" id="IPR036157">
    <property type="entry name" value="dUTPase-like_sf"/>
</dbReference>
<dbReference type="InterPro" id="IPR033704">
    <property type="entry name" value="dUTPase_trimeric"/>
</dbReference>
<dbReference type="NCBIfam" id="TIGR02274">
    <property type="entry name" value="dCTP_deam"/>
    <property type="match status" value="1"/>
</dbReference>
<dbReference type="PANTHER" id="PTHR42680">
    <property type="entry name" value="DCTP DEAMINASE"/>
    <property type="match status" value="1"/>
</dbReference>
<dbReference type="PANTHER" id="PTHR42680:SF3">
    <property type="entry name" value="DCTP DEAMINASE"/>
    <property type="match status" value="1"/>
</dbReference>
<dbReference type="Pfam" id="PF22769">
    <property type="entry name" value="DCD"/>
    <property type="match status" value="1"/>
</dbReference>
<dbReference type="SUPFAM" id="SSF51283">
    <property type="entry name" value="dUTPase-like"/>
    <property type="match status" value="1"/>
</dbReference>